<sequence>MDRCKHVGRLRLAQDHSILNPQKWCCLECATTESVWACLKCSHVACGRYIEDHALKHFEETGHPLAMEVRDLYVFCYLCKDYVLNDNPEGDLKLLRSSLLAVRGQKQDTPVRRGRTLRSMASGEDVVLPQRAPQGQPQMLTALWYRRQRLLARTLRLWFEKSSRGQAKLEQRRQEEALERKKEEARRRRREVKRRLLEELASTPPRKSARLLLHTPRDAGPAASRPAALPTSRRVPAATLKLRRQPAMAPGVTGLRNLGNTCYMNSILQVLSHLQKFRECFLNLDPSKTEHLFPKATNGKTQLSGKPTNSSATELSLRNDRAEACEREGFCWNGRASISRSLELIQNKEPSSKHISLCRELHTLFRVMWSGKWALVSPFAMLHSVWSLIPAFRGYDQQDAQEFLCELLHKVQQELESEGTTRRILIPFSQRKLTKQVLKVVNTIFHGQLLSQVTCISCNYKSNTIEPFWDLSLEFPERYHCIEKGFVPLNQTECLLTEMLAKFTETEALEGRIYACDQCNSKRRKSNPKPLVLSEARKQLMIYRLPQVLRLHLKRFRWSGRNHREKIGVHVVFDQVLTMEPYCCRDMLSSLDKETFAYDLSAVVMHHGKGFGSGHYTAYCYNTEGGFWVHCNDSKLNVCSVEEVCKTQAYILFYTQRTVQGNARISETHLQAQVQSSNNDEGRPQTFS</sequence>
<comment type="function">
    <text evidence="6 7 8 9 10 11">Deubiquitinase that plays a role in several cellular processes including transcriptional regulation, cell cycle progression or innate immunity. Specifically deubiquitinates histone H2B at 'Lys-120' (H2BK120Ub), a specific tag for epigenetic transcriptional activation and acts as a regulator of mRNA splicing (PubMed:23824326). Antagonizes DNA double-strand break-induced ubiquitination of H2AX thereby participating in the maintenance of genome integrity (PubMed:35598681). Plays a role in the negative regulation of cell proliferation through the AKT pathway by deubiquitinating FKBP51, leading to enhanced AKT1 dephosphorylation by PHLPP1 (PubMed:28363942). Also regulates the mitotic spindle checkpoint and prevents aneuploidy (PubMed:36702832). Negatively regulates cellular antiviral responses via deconjugating 'Lys-63'-linked ubiquitination of STING1 (PubMed:30943264). Significantly enhances the anti-HIV-1 activity of APOBEC3G. Mechanistically, stabilizes APOBEC3G by counteracting HIV-1 Vif-mediated APOBEC3G ubiquitination (PubMed:31397674).</text>
</comment>
<comment type="catalytic activity">
    <reaction evidence="5 6 7 10">
        <text>Thiol-dependent hydrolysis of ester, thioester, amide, peptide and isopeptide bonds formed by the C-terminal Gly of ubiquitin (a 76-residue protein attached to proteins as an intracellular targeting signal).</text>
        <dbReference type="EC" id="3.4.19.12"/>
    </reaction>
</comment>
<comment type="subunit">
    <text evidence="6 11">Component of a complex with RUVBL1 and PSMC5 (PubMed:23824326). Interacts with centrins CETN1, CETN2 and CETN3 (PubMed:36702832).</text>
</comment>
<comment type="interaction">
    <interactant intactId="EBI-2511022">
        <id>Q70CQ1</id>
    </interactant>
    <interactant intactId="EBI-306914">
        <id>Q13451</id>
        <label>FKBP5</label>
    </interactant>
    <organismsDiffer>false</organismsDiffer>
    <experiments>2</experiments>
</comment>
<comment type="interaction">
    <interactant intactId="EBI-12133829">
        <id>Q70CQ1-2</id>
    </interactant>
    <interactant intactId="EBI-2829310">
        <id>P43490</id>
        <label>NAMPT</label>
    </interactant>
    <organismsDiffer>false</organismsDiffer>
    <experiments>3</experiments>
</comment>
<comment type="interaction">
    <interactant intactId="EBI-12133829">
        <id>Q70CQ1-2</id>
    </interactant>
    <interactant intactId="EBI-12154567">
        <id>Q8WV60</id>
        <label>PTCD2</label>
    </interactant>
    <organismsDiffer>false</organismsDiffer>
    <experiments>3</experiments>
</comment>
<comment type="interaction">
    <interactant intactId="EBI-12133829">
        <id>Q70CQ1-2</id>
    </interactant>
    <interactant intactId="EBI-10251462">
        <id>Q6NX45</id>
        <label>ZNF774</label>
    </interactant>
    <organismsDiffer>false</organismsDiffer>
    <experiments>3</experiments>
</comment>
<comment type="subcellular location">
    <subcellularLocation>
        <location evidence="9 14">Nucleus</location>
    </subcellularLocation>
    <subcellularLocation>
        <location evidence="9">Cytoplasm</location>
    </subcellularLocation>
</comment>
<comment type="alternative products">
    <event type="alternative splicing"/>
    <isoform>
        <id>Q70CQ1-1</id>
        <name>1</name>
        <sequence type="displayed"/>
    </isoform>
    <isoform>
        <id>Q70CQ1-2</id>
        <name>2</name>
        <sequence type="described" ref="VSP_011556"/>
    </isoform>
</comment>
<comment type="similarity">
    <text evidence="13">Belongs to the peptidase C19 family.</text>
</comment>
<feature type="chain" id="PRO_0000080678" description="Ubiquitin carboxyl-terminal hydrolase 49">
    <location>
        <begin position="1"/>
        <end position="688"/>
    </location>
</feature>
<feature type="domain" description="USP">
    <location>
        <begin position="253"/>
        <end position="657"/>
    </location>
</feature>
<feature type="zinc finger region" description="UBP-type" evidence="1">
    <location>
        <begin position="2"/>
        <end position="99"/>
    </location>
</feature>
<feature type="region of interest" description="Disordered" evidence="4">
    <location>
        <begin position="169"/>
        <end position="230"/>
    </location>
</feature>
<feature type="region of interest" description="Disordered" evidence="4">
    <location>
        <begin position="293"/>
        <end position="315"/>
    </location>
</feature>
<feature type="compositionally biased region" description="Basic and acidic residues" evidence="4">
    <location>
        <begin position="169"/>
        <end position="186"/>
    </location>
</feature>
<feature type="compositionally biased region" description="Polar residues" evidence="4">
    <location>
        <begin position="298"/>
        <end position="315"/>
    </location>
</feature>
<feature type="active site" description="Nucleophile" evidence="13">
    <location>
        <position position="262"/>
    </location>
</feature>
<feature type="active site" description="Proton acceptor" evidence="2 3">
    <location>
        <position position="615"/>
    </location>
</feature>
<feature type="binding site" evidence="1">
    <location>
        <position position="4"/>
    </location>
    <ligand>
        <name>Zn(2+)</name>
        <dbReference type="ChEBI" id="CHEBI:29105"/>
        <label>1</label>
    </ligand>
</feature>
<feature type="binding site" evidence="1">
    <location>
        <position position="6"/>
    </location>
    <ligand>
        <name>Zn(2+)</name>
        <dbReference type="ChEBI" id="CHEBI:29105"/>
        <label>1</label>
    </ligand>
</feature>
<feature type="binding site" evidence="1">
    <location>
        <position position="26"/>
    </location>
    <ligand>
        <name>Zn(2+)</name>
        <dbReference type="ChEBI" id="CHEBI:29105"/>
        <label>2</label>
    </ligand>
</feature>
<feature type="binding site" evidence="1">
    <location>
        <position position="29"/>
    </location>
    <ligand>
        <name>Zn(2+)</name>
        <dbReference type="ChEBI" id="CHEBI:29105"/>
        <label>2</label>
    </ligand>
</feature>
<feature type="binding site" evidence="1">
    <location>
        <position position="38"/>
    </location>
    <ligand>
        <name>Zn(2+)</name>
        <dbReference type="ChEBI" id="CHEBI:29105"/>
        <label>3</label>
    </ligand>
</feature>
<feature type="binding site" evidence="1">
    <location>
        <position position="41"/>
    </location>
    <ligand>
        <name>Zn(2+)</name>
        <dbReference type="ChEBI" id="CHEBI:29105"/>
        <label>3</label>
    </ligand>
</feature>
<feature type="binding site" evidence="1">
    <location>
        <position position="46"/>
    </location>
    <ligand>
        <name>Zn(2+)</name>
        <dbReference type="ChEBI" id="CHEBI:29105"/>
        <label>2</label>
    </ligand>
</feature>
<feature type="binding site" evidence="1">
    <location>
        <position position="53"/>
    </location>
    <ligand>
        <name>Zn(2+)</name>
        <dbReference type="ChEBI" id="CHEBI:29105"/>
        <label>2</label>
    </ligand>
</feature>
<feature type="binding site" evidence="1">
    <location>
        <position position="57"/>
    </location>
    <ligand>
        <name>Zn(2+)</name>
        <dbReference type="ChEBI" id="CHEBI:29105"/>
        <label>3</label>
    </ligand>
</feature>
<feature type="binding site" evidence="1">
    <location>
        <position position="63"/>
    </location>
    <ligand>
        <name>Zn(2+)</name>
        <dbReference type="ChEBI" id="CHEBI:29105"/>
        <label>3</label>
    </ligand>
</feature>
<feature type="binding site" evidence="1">
    <location>
        <position position="76"/>
    </location>
    <ligand>
        <name>Zn(2+)</name>
        <dbReference type="ChEBI" id="CHEBI:29105"/>
        <label>1</label>
    </ligand>
</feature>
<feature type="binding site" evidence="1">
    <location>
        <position position="79"/>
    </location>
    <ligand>
        <name>Zn(2+)</name>
        <dbReference type="ChEBI" id="CHEBI:29105"/>
        <label>1</label>
    </ligand>
</feature>
<feature type="splice variant" id="VSP_011556" description="In isoform 2." evidence="12">
    <original>FWVHCNDSKLNVCSVEEVCKTQAYILFYTQRTVQGNARISETHLQAQVQSSNNDEGRPQTFS</original>
    <variation>ACALLCGVGDTERG</variation>
    <location>
        <begin position="627"/>
        <end position="688"/>
    </location>
</feature>
<feature type="mutagenesis site" description="Complete loss of interaction with CETN1 and CETN2." evidence="11">
    <original>W</original>
    <variation>A</variation>
    <location>
        <position position="158"/>
    </location>
</feature>
<feature type="mutagenesis site" description="Loss of deubiquitinase activity." evidence="6 7 10">
    <original>C</original>
    <variation>A</variation>
    <location>
        <position position="262"/>
    </location>
</feature>
<gene>
    <name type="primary">USP49</name>
</gene>
<proteinExistence type="evidence at protein level"/>
<organism>
    <name type="scientific">Homo sapiens</name>
    <name type="common">Human</name>
    <dbReference type="NCBI Taxonomy" id="9606"/>
    <lineage>
        <taxon>Eukaryota</taxon>
        <taxon>Metazoa</taxon>
        <taxon>Chordata</taxon>
        <taxon>Craniata</taxon>
        <taxon>Vertebrata</taxon>
        <taxon>Euteleostomi</taxon>
        <taxon>Mammalia</taxon>
        <taxon>Eutheria</taxon>
        <taxon>Euarchontoglires</taxon>
        <taxon>Primates</taxon>
        <taxon>Haplorrhini</taxon>
        <taxon>Catarrhini</taxon>
        <taxon>Hominidae</taxon>
        <taxon>Homo</taxon>
    </lineage>
</organism>
<keyword id="KW-0025">Alternative splicing</keyword>
<keyword id="KW-0156">Chromatin regulator</keyword>
<keyword id="KW-0963">Cytoplasm</keyword>
<keyword id="KW-0378">Hydrolase</keyword>
<keyword id="KW-0479">Metal-binding</keyword>
<keyword id="KW-0507">mRNA processing</keyword>
<keyword id="KW-0508">mRNA splicing</keyword>
<keyword id="KW-0539">Nucleus</keyword>
<keyword id="KW-0645">Protease</keyword>
<keyword id="KW-1267">Proteomics identification</keyword>
<keyword id="KW-1185">Reference proteome</keyword>
<keyword id="KW-0788">Thiol protease</keyword>
<keyword id="KW-0833">Ubl conjugation pathway</keyword>
<keyword id="KW-0862">Zinc</keyword>
<keyword id="KW-0863">Zinc-finger</keyword>
<evidence type="ECO:0000255" key="1">
    <source>
        <dbReference type="PROSITE-ProRule" id="PRU00502"/>
    </source>
</evidence>
<evidence type="ECO:0000255" key="2">
    <source>
        <dbReference type="PROSITE-ProRule" id="PRU10092"/>
    </source>
</evidence>
<evidence type="ECO:0000255" key="3">
    <source>
        <dbReference type="PROSITE-ProRule" id="PRU10093"/>
    </source>
</evidence>
<evidence type="ECO:0000256" key="4">
    <source>
        <dbReference type="SAM" id="MobiDB-lite"/>
    </source>
</evidence>
<evidence type="ECO:0000269" key="5">
    <source>
    </source>
</evidence>
<evidence type="ECO:0000269" key="6">
    <source>
    </source>
</evidence>
<evidence type="ECO:0000269" key="7">
    <source>
    </source>
</evidence>
<evidence type="ECO:0000269" key="8">
    <source>
    </source>
</evidence>
<evidence type="ECO:0000269" key="9">
    <source>
    </source>
</evidence>
<evidence type="ECO:0000269" key="10">
    <source>
    </source>
</evidence>
<evidence type="ECO:0000269" key="11">
    <source>
    </source>
</evidence>
<evidence type="ECO:0000303" key="12">
    <source>
    </source>
</evidence>
<evidence type="ECO:0000305" key="13"/>
<evidence type="ECO:0000305" key="14">
    <source>
    </source>
</evidence>
<name>UBP49_HUMAN</name>
<dbReference type="EC" id="3.4.19.12" evidence="7 10"/>
<dbReference type="EMBL" id="AJ586139">
    <property type="protein sequence ID" value="CAE51939.1"/>
    <property type="molecule type" value="mRNA"/>
</dbReference>
<dbReference type="EMBL" id="AL365205">
    <property type="status" value="NOT_ANNOTATED_CDS"/>
    <property type="molecule type" value="Genomic_DNA"/>
</dbReference>
<dbReference type="EMBL" id="CH471081">
    <property type="protein sequence ID" value="EAX04065.1"/>
    <property type="molecule type" value="Genomic_DNA"/>
</dbReference>
<dbReference type="EMBL" id="BC014176">
    <property type="protein sequence ID" value="AAH14176.1"/>
    <property type="molecule type" value="mRNA"/>
</dbReference>
<dbReference type="CCDS" id="CCDS4861.1">
    <molecule id="Q70CQ1-2"/>
</dbReference>
<dbReference type="CCDS" id="CCDS69111.1">
    <molecule id="Q70CQ1-1"/>
</dbReference>
<dbReference type="RefSeq" id="NP_001273483.1">
    <molecule id="Q70CQ1-1"/>
    <property type="nucleotide sequence ID" value="NM_001286554.2"/>
</dbReference>
<dbReference type="RefSeq" id="NP_001371471.1">
    <molecule id="Q70CQ1-1"/>
    <property type="nucleotide sequence ID" value="NM_001384542.1"/>
</dbReference>
<dbReference type="RefSeq" id="NP_061031.2">
    <molecule id="Q70CQ1-2"/>
    <property type="nucleotide sequence ID" value="NM_018561.4"/>
</dbReference>
<dbReference type="SMR" id="Q70CQ1"/>
<dbReference type="BioGRID" id="117382">
    <property type="interactions" value="59"/>
</dbReference>
<dbReference type="FunCoup" id="Q70CQ1">
    <property type="interactions" value="1837"/>
</dbReference>
<dbReference type="IntAct" id="Q70CQ1">
    <property type="interactions" value="52"/>
</dbReference>
<dbReference type="STRING" id="9606.ENSP00000377797"/>
<dbReference type="BindingDB" id="Q70CQ1"/>
<dbReference type="ChEMBL" id="CHEMBL5291581"/>
<dbReference type="MEROPS" id="C19.073"/>
<dbReference type="iPTMnet" id="Q70CQ1"/>
<dbReference type="PhosphoSitePlus" id="Q70CQ1"/>
<dbReference type="BioMuta" id="USP49"/>
<dbReference type="DMDM" id="52000871"/>
<dbReference type="MassIVE" id="Q70CQ1"/>
<dbReference type="PaxDb" id="9606-ENSP00000377797"/>
<dbReference type="PeptideAtlas" id="Q70CQ1"/>
<dbReference type="ProteomicsDB" id="68519">
    <molecule id="Q70CQ1-1"/>
</dbReference>
<dbReference type="ProteomicsDB" id="68520">
    <molecule id="Q70CQ1-2"/>
</dbReference>
<dbReference type="Antibodypedia" id="35153">
    <property type="antibodies" value="109 antibodies from 22 providers"/>
</dbReference>
<dbReference type="DNASU" id="25862"/>
<dbReference type="Ensembl" id="ENST00000373006.5">
    <molecule id="Q70CQ1-2"/>
    <property type="protein sequence ID" value="ENSP00000362097.1"/>
    <property type="gene ID" value="ENSG00000164663.15"/>
</dbReference>
<dbReference type="Ensembl" id="ENST00000394253.7">
    <molecule id="Q70CQ1-1"/>
    <property type="protein sequence ID" value="ENSP00000377797.2"/>
    <property type="gene ID" value="ENSG00000164663.15"/>
</dbReference>
<dbReference type="Ensembl" id="ENST00000682992.1">
    <molecule id="Q70CQ1-1"/>
    <property type="protein sequence ID" value="ENSP00000507239.1"/>
    <property type="gene ID" value="ENSG00000164663.15"/>
</dbReference>
<dbReference type="GeneID" id="25862"/>
<dbReference type="KEGG" id="hsa:25862"/>
<dbReference type="MANE-Select" id="ENST00000682992.1">
    <property type="protein sequence ID" value="ENSP00000507239.1"/>
    <property type="RefSeq nucleotide sequence ID" value="NM_001286554.2"/>
    <property type="RefSeq protein sequence ID" value="NP_001273483.1"/>
</dbReference>
<dbReference type="UCSC" id="uc003orh.3">
    <molecule id="Q70CQ1-1"/>
    <property type="organism name" value="human"/>
</dbReference>
<dbReference type="AGR" id="HGNC:20078"/>
<dbReference type="CTD" id="25862"/>
<dbReference type="DisGeNET" id="25862"/>
<dbReference type="GeneCards" id="USP49"/>
<dbReference type="HGNC" id="HGNC:20078">
    <property type="gene designation" value="USP49"/>
</dbReference>
<dbReference type="HPA" id="ENSG00000164663">
    <property type="expression patterns" value="Low tissue specificity"/>
</dbReference>
<dbReference type="neXtProt" id="NX_Q70CQ1"/>
<dbReference type="OpenTargets" id="ENSG00000164663"/>
<dbReference type="PharmGKB" id="PA134954570"/>
<dbReference type="VEuPathDB" id="HostDB:ENSG00000164663"/>
<dbReference type="eggNOG" id="KOG1867">
    <property type="taxonomic scope" value="Eukaryota"/>
</dbReference>
<dbReference type="GeneTree" id="ENSGT00940000157997"/>
<dbReference type="HOGENOM" id="CLU_008279_13_1_1"/>
<dbReference type="InParanoid" id="Q70CQ1"/>
<dbReference type="OMA" id="GQKQDQP"/>
<dbReference type="OrthoDB" id="21192at2759"/>
<dbReference type="PAN-GO" id="Q70CQ1">
    <property type="GO annotations" value="1 GO annotation based on evolutionary models"/>
</dbReference>
<dbReference type="PhylomeDB" id="Q70CQ1"/>
<dbReference type="TreeFam" id="TF315281"/>
<dbReference type="PathwayCommons" id="Q70CQ1"/>
<dbReference type="Reactome" id="R-HSA-5689880">
    <property type="pathway name" value="Ub-specific processing proteases"/>
</dbReference>
<dbReference type="SignaLink" id="Q70CQ1"/>
<dbReference type="BioGRID-ORCS" id="25862">
    <property type="hits" value="13 hits in 1202 CRISPR screens"/>
</dbReference>
<dbReference type="ChiTaRS" id="USP49">
    <property type="organism name" value="human"/>
</dbReference>
<dbReference type="GenomeRNAi" id="25862"/>
<dbReference type="Pharos" id="Q70CQ1">
    <property type="development level" value="Tbio"/>
</dbReference>
<dbReference type="PRO" id="PR:Q70CQ1"/>
<dbReference type="Proteomes" id="UP000005640">
    <property type="component" value="Chromosome 6"/>
</dbReference>
<dbReference type="RNAct" id="Q70CQ1">
    <property type="molecule type" value="protein"/>
</dbReference>
<dbReference type="Bgee" id="ENSG00000164663">
    <property type="expression patterns" value="Expressed in buccal mucosa cell and 160 other cell types or tissues"/>
</dbReference>
<dbReference type="ExpressionAtlas" id="Q70CQ1">
    <property type="expression patterns" value="baseline and differential"/>
</dbReference>
<dbReference type="GO" id="GO:0005737">
    <property type="term" value="C:cytoplasm"/>
    <property type="evidence" value="ECO:0000318"/>
    <property type="project" value="GO_Central"/>
</dbReference>
<dbReference type="GO" id="GO:0005654">
    <property type="term" value="C:nucleoplasm"/>
    <property type="evidence" value="ECO:0000304"/>
    <property type="project" value="Reactome"/>
</dbReference>
<dbReference type="GO" id="GO:0004843">
    <property type="term" value="F:cysteine-type deubiquitinase activity"/>
    <property type="evidence" value="ECO:0000314"/>
    <property type="project" value="UniProtKB"/>
</dbReference>
<dbReference type="GO" id="GO:0004197">
    <property type="term" value="F:cysteine-type endopeptidase activity"/>
    <property type="evidence" value="ECO:0000315"/>
    <property type="project" value="UniProtKB"/>
</dbReference>
<dbReference type="GO" id="GO:0042393">
    <property type="term" value="F:histone binding"/>
    <property type="evidence" value="ECO:0000314"/>
    <property type="project" value="UniProtKB"/>
</dbReference>
<dbReference type="GO" id="GO:0140936">
    <property type="term" value="F:histone H2B deubiquitinase activity"/>
    <property type="evidence" value="ECO:0000314"/>
    <property type="project" value="UniProtKB"/>
</dbReference>
<dbReference type="GO" id="GO:0008270">
    <property type="term" value="F:zinc ion binding"/>
    <property type="evidence" value="ECO:0007669"/>
    <property type="project" value="UniProtKB-KW"/>
</dbReference>
<dbReference type="GO" id="GO:0000398">
    <property type="term" value="P:mRNA splicing, via spliceosome"/>
    <property type="evidence" value="ECO:0000315"/>
    <property type="project" value="UniProtKB"/>
</dbReference>
<dbReference type="GO" id="GO:0051898">
    <property type="term" value="P:negative regulation of phosphatidylinositol 3-kinase/protein kinase B signal transduction"/>
    <property type="evidence" value="ECO:0000314"/>
    <property type="project" value="UniProt"/>
</dbReference>
<dbReference type="GO" id="GO:0016579">
    <property type="term" value="P:protein deubiquitination"/>
    <property type="evidence" value="ECO:0000314"/>
    <property type="project" value="UniProt"/>
</dbReference>
<dbReference type="GO" id="GO:0006508">
    <property type="term" value="P:proteolysis"/>
    <property type="evidence" value="ECO:0007669"/>
    <property type="project" value="UniProtKB-KW"/>
</dbReference>
<dbReference type="FunFam" id="3.30.40.10:FF:000067">
    <property type="entry name" value="Ubiquitinyl hydrolase 1"/>
    <property type="match status" value="1"/>
</dbReference>
<dbReference type="FunFam" id="3.90.70.10:FF:000028">
    <property type="entry name" value="Ubiquitinyl hydrolase 1"/>
    <property type="match status" value="1"/>
</dbReference>
<dbReference type="Gene3D" id="3.90.70.10">
    <property type="entry name" value="Cysteine proteinases"/>
    <property type="match status" value="1"/>
</dbReference>
<dbReference type="Gene3D" id="3.30.40.10">
    <property type="entry name" value="Zinc/RING finger domain, C3HC4 (zinc finger)"/>
    <property type="match status" value="1"/>
</dbReference>
<dbReference type="InterPro" id="IPR038765">
    <property type="entry name" value="Papain-like_cys_pep_sf"/>
</dbReference>
<dbReference type="InterPro" id="IPR001394">
    <property type="entry name" value="Peptidase_C19_UCH"/>
</dbReference>
<dbReference type="InterPro" id="IPR050185">
    <property type="entry name" value="Ub_carboxyl-term_hydrolase"/>
</dbReference>
<dbReference type="InterPro" id="IPR018200">
    <property type="entry name" value="USP_CS"/>
</dbReference>
<dbReference type="InterPro" id="IPR028889">
    <property type="entry name" value="USP_dom"/>
</dbReference>
<dbReference type="InterPro" id="IPR013083">
    <property type="entry name" value="Znf_RING/FYVE/PHD"/>
</dbReference>
<dbReference type="InterPro" id="IPR001607">
    <property type="entry name" value="Znf_UBP"/>
</dbReference>
<dbReference type="PANTHER" id="PTHR21646">
    <property type="entry name" value="UBIQUITIN CARBOXYL-TERMINAL HYDROLASE"/>
    <property type="match status" value="1"/>
</dbReference>
<dbReference type="PANTHER" id="PTHR21646:SF7">
    <property type="entry name" value="UBIQUITIN CARBOXYL-TERMINAL HYDROLASE 49"/>
    <property type="match status" value="1"/>
</dbReference>
<dbReference type="Pfam" id="PF00443">
    <property type="entry name" value="UCH"/>
    <property type="match status" value="1"/>
</dbReference>
<dbReference type="Pfam" id="PF02148">
    <property type="entry name" value="zf-UBP"/>
    <property type="match status" value="1"/>
</dbReference>
<dbReference type="SMART" id="SM00290">
    <property type="entry name" value="ZnF_UBP"/>
    <property type="match status" value="1"/>
</dbReference>
<dbReference type="SUPFAM" id="SSF54001">
    <property type="entry name" value="Cysteine proteinases"/>
    <property type="match status" value="1"/>
</dbReference>
<dbReference type="SUPFAM" id="SSF57850">
    <property type="entry name" value="RING/U-box"/>
    <property type="match status" value="1"/>
</dbReference>
<dbReference type="PROSITE" id="PS00972">
    <property type="entry name" value="USP_1"/>
    <property type="match status" value="1"/>
</dbReference>
<dbReference type="PROSITE" id="PS00973">
    <property type="entry name" value="USP_2"/>
    <property type="match status" value="1"/>
</dbReference>
<dbReference type="PROSITE" id="PS50235">
    <property type="entry name" value="USP_3"/>
    <property type="match status" value="1"/>
</dbReference>
<dbReference type="PROSITE" id="PS50271">
    <property type="entry name" value="ZF_UBP"/>
    <property type="match status" value="1"/>
</dbReference>
<accession>Q70CQ1</accession>
<accession>Q5T3D9</accession>
<accession>Q5T3E0</accession>
<accession>Q96CK4</accession>
<protein>
    <recommendedName>
        <fullName>Ubiquitin carboxyl-terminal hydrolase 49</fullName>
        <ecNumber evidence="7 10">3.4.19.12</ecNumber>
    </recommendedName>
    <alternativeName>
        <fullName>Deubiquitinating enzyme 49</fullName>
    </alternativeName>
    <alternativeName>
        <fullName>Ubiquitin thioesterase 49</fullName>
    </alternativeName>
    <alternativeName>
        <fullName>Ubiquitin-specific-processing protease 49</fullName>
    </alternativeName>
</protein>
<reference key="1">
    <citation type="journal article" date="2004" name="Biochem. Biophys. Res. Commun.">
        <title>Cloning and enzymatic analysis of 22 novel human ubiquitin-specific proteases.</title>
        <authorList>
            <person name="Quesada V."/>
            <person name="Diaz-Perales A."/>
            <person name="Gutierrez-Fernandez A."/>
            <person name="Garabaya C."/>
            <person name="Cal S."/>
            <person name="Lopez-Otin C."/>
        </authorList>
    </citation>
    <scope>NUCLEOTIDE SEQUENCE [MRNA] (ISOFORM 1)</scope>
    <scope>ENZYME ACTIVITY</scope>
</reference>
<reference key="2">
    <citation type="journal article" date="2003" name="Nature">
        <title>The DNA sequence and analysis of human chromosome 6.</title>
        <authorList>
            <person name="Mungall A.J."/>
            <person name="Palmer S.A."/>
            <person name="Sims S.K."/>
            <person name="Edwards C.A."/>
            <person name="Ashurst J.L."/>
            <person name="Wilming L."/>
            <person name="Jones M.C."/>
            <person name="Horton R."/>
            <person name="Hunt S.E."/>
            <person name="Scott C.E."/>
            <person name="Gilbert J.G.R."/>
            <person name="Clamp M.E."/>
            <person name="Bethel G."/>
            <person name="Milne S."/>
            <person name="Ainscough R."/>
            <person name="Almeida J.P."/>
            <person name="Ambrose K.D."/>
            <person name="Andrews T.D."/>
            <person name="Ashwell R.I.S."/>
            <person name="Babbage A.K."/>
            <person name="Bagguley C.L."/>
            <person name="Bailey J."/>
            <person name="Banerjee R."/>
            <person name="Barker D.J."/>
            <person name="Barlow K.F."/>
            <person name="Bates K."/>
            <person name="Beare D.M."/>
            <person name="Beasley H."/>
            <person name="Beasley O."/>
            <person name="Bird C.P."/>
            <person name="Blakey S.E."/>
            <person name="Bray-Allen S."/>
            <person name="Brook J."/>
            <person name="Brown A.J."/>
            <person name="Brown J.Y."/>
            <person name="Burford D.C."/>
            <person name="Burrill W."/>
            <person name="Burton J."/>
            <person name="Carder C."/>
            <person name="Carter N.P."/>
            <person name="Chapman J.C."/>
            <person name="Clark S.Y."/>
            <person name="Clark G."/>
            <person name="Clee C.M."/>
            <person name="Clegg S."/>
            <person name="Cobley V."/>
            <person name="Collier R.E."/>
            <person name="Collins J.E."/>
            <person name="Colman L.K."/>
            <person name="Corby N.R."/>
            <person name="Coville G.J."/>
            <person name="Culley K.M."/>
            <person name="Dhami P."/>
            <person name="Davies J."/>
            <person name="Dunn M."/>
            <person name="Earthrowl M.E."/>
            <person name="Ellington A.E."/>
            <person name="Evans K.A."/>
            <person name="Faulkner L."/>
            <person name="Francis M.D."/>
            <person name="Frankish A."/>
            <person name="Frankland J."/>
            <person name="French L."/>
            <person name="Garner P."/>
            <person name="Garnett J."/>
            <person name="Ghori M.J."/>
            <person name="Gilby L.M."/>
            <person name="Gillson C.J."/>
            <person name="Glithero R.J."/>
            <person name="Grafham D.V."/>
            <person name="Grant M."/>
            <person name="Gribble S."/>
            <person name="Griffiths C."/>
            <person name="Griffiths M.N.D."/>
            <person name="Hall R."/>
            <person name="Halls K.S."/>
            <person name="Hammond S."/>
            <person name="Harley J.L."/>
            <person name="Hart E.A."/>
            <person name="Heath P.D."/>
            <person name="Heathcott R."/>
            <person name="Holmes S.J."/>
            <person name="Howden P.J."/>
            <person name="Howe K.L."/>
            <person name="Howell G.R."/>
            <person name="Huckle E."/>
            <person name="Humphray S.J."/>
            <person name="Humphries M.D."/>
            <person name="Hunt A.R."/>
            <person name="Johnson C.M."/>
            <person name="Joy A.A."/>
            <person name="Kay M."/>
            <person name="Keenan S.J."/>
            <person name="Kimberley A.M."/>
            <person name="King A."/>
            <person name="Laird G.K."/>
            <person name="Langford C."/>
            <person name="Lawlor S."/>
            <person name="Leongamornlert D.A."/>
            <person name="Leversha M."/>
            <person name="Lloyd C.R."/>
            <person name="Lloyd D.M."/>
            <person name="Loveland J.E."/>
            <person name="Lovell J."/>
            <person name="Martin S."/>
            <person name="Mashreghi-Mohammadi M."/>
            <person name="Maslen G.L."/>
            <person name="Matthews L."/>
            <person name="McCann O.T."/>
            <person name="McLaren S.J."/>
            <person name="McLay K."/>
            <person name="McMurray A."/>
            <person name="Moore M.J.F."/>
            <person name="Mullikin J.C."/>
            <person name="Niblett D."/>
            <person name="Nickerson T."/>
            <person name="Novik K.L."/>
            <person name="Oliver K."/>
            <person name="Overton-Larty E.K."/>
            <person name="Parker A."/>
            <person name="Patel R."/>
            <person name="Pearce A.V."/>
            <person name="Peck A.I."/>
            <person name="Phillimore B.J.C.T."/>
            <person name="Phillips S."/>
            <person name="Plumb R.W."/>
            <person name="Porter K.M."/>
            <person name="Ramsey Y."/>
            <person name="Ranby S.A."/>
            <person name="Rice C.M."/>
            <person name="Ross M.T."/>
            <person name="Searle S.M."/>
            <person name="Sehra H.K."/>
            <person name="Sheridan E."/>
            <person name="Skuce C.D."/>
            <person name="Smith S."/>
            <person name="Smith M."/>
            <person name="Spraggon L."/>
            <person name="Squares S.L."/>
            <person name="Steward C.A."/>
            <person name="Sycamore N."/>
            <person name="Tamlyn-Hall G."/>
            <person name="Tester J."/>
            <person name="Theaker A.J."/>
            <person name="Thomas D.W."/>
            <person name="Thorpe A."/>
            <person name="Tracey A."/>
            <person name="Tromans A."/>
            <person name="Tubby B."/>
            <person name="Wall M."/>
            <person name="Wallis J.M."/>
            <person name="West A.P."/>
            <person name="White S.S."/>
            <person name="Whitehead S.L."/>
            <person name="Whittaker H."/>
            <person name="Wild A."/>
            <person name="Willey D.J."/>
            <person name="Wilmer T.E."/>
            <person name="Wood J.M."/>
            <person name="Wray P.W."/>
            <person name="Wyatt J.C."/>
            <person name="Young L."/>
            <person name="Younger R.M."/>
            <person name="Bentley D.R."/>
            <person name="Coulson A."/>
            <person name="Durbin R.M."/>
            <person name="Hubbard T."/>
            <person name="Sulston J.E."/>
            <person name="Dunham I."/>
            <person name="Rogers J."/>
            <person name="Beck S."/>
        </authorList>
    </citation>
    <scope>NUCLEOTIDE SEQUENCE [LARGE SCALE GENOMIC DNA]</scope>
</reference>
<reference key="3">
    <citation type="submission" date="2005-07" db="EMBL/GenBank/DDBJ databases">
        <authorList>
            <person name="Mural R.J."/>
            <person name="Istrail S."/>
            <person name="Sutton G.G."/>
            <person name="Florea L."/>
            <person name="Halpern A.L."/>
            <person name="Mobarry C.M."/>
            <person name="Lippert R."/>
            <person name="Walenz B."/>
            <person name="Shatkay H."/>
            <person name="Dew I."/>
            <person name="Miller J.R."/>
            <person name="Flanigan M.J."/>
            <person name="Edwards N.J."/>
            <person name="Bolanos R."/>
            <person name="Fasulo D."/>
            <person name="Halldorsson B.V."/>
            <person name="Hannenhalli S."/>
            <person name="Turner R."/>
            <person name="Yooseph S."/>
            <person name="Lu F."/>
            <person name="Nusskern D.R."/>
            <person name="Shue B.C."/>
            <person name="Zheng X.H."/>
            <person name="Zhong F."/>
            <person name="Delcher A.L."/>
            <person name="Huson D.H."/>
            <person name="Kravitz S.A."/>
            <person name="Mouchard L."/>
            <person name="Reinert K."/>
            <person name="Remington K.A."/>
            <person name="Clark A.G."/>
            <person name="Waterman M.S."/>
            <person name="Eichler E.E."/>
            <person name="Adams M.D."/>
            <person name="Hunkapiller M.W."/>
            <person name="Myers E.W."/>
            <person name="Venter J.C."/>
        </authorList>
    </citation>
    <scope>NUCLEOTIDE SEQUENCE [LARGE SCALE GENOMIC DNA]</scope>
</reference>
<reference key="4">
    <citation type="journal article" date="2004" name="Genome Res.">
        <title>The status, quality, and expansion of the NIH full-length cDNA project: the Mammalian Gene Collection (MGC).</title>
        <authorList>
            <consortium name="The MGC Project Team"/>
        </authorList>
    </citation>
    <scope>NUCLEOTIDE SEQUENCE [LARGE SCALE MRNA] (ISOFORM 2)</scope>
    <source>
        <tissue>Eye</tissue>
    </source>
</reference>
<reference key="5">
    <citation type="journal article" date="2013" name="Genes Dev.">
        <title>USP49 deubiquitinates histone H2B and regulates cotranscriptional pre-mRNA splicing.</title>
        <authorList>
            <person name="Zhang Z."/>
            <person name="Jones A."/>
            <person name="Joo H.Y."/>
            <person name="Zhou D."/>
            <person name="Cao Y."/>
            <person name="Chen S."/>
            <person name="Erdjument-Bromage H."/>
            <person name="Renfrow M."/>
            <person name="He H."/>
            <person name="Tempst P."/>
            <person name="Townes T.M."/>
            <person name="Giles K.E."/>
            <person name="Ma L."/>
            <person name="Wang H."/>
        </authorList>
    </citation>
    <scope>FUNCTION</scope>
    <scope>CATALYTIC ACTIVITY</scope>
    <scope>SUBCELLULAR LOCATION</scope>
    <scope>IDENTIFICATION IN A COMPLEX WITH RUVBL1 AND PSMC5</scope>
    <scope>MUTAGENESIS OF CYS-262</scope>
</reference>
<reference key="6">
    <citation type="journal article" date="2017" name="EMBO J.">
        <title>USP49 negatively regulates tumorigenesis and chemoresistance through FKBP51-AKT signaling.</title>
        <authorList>
            <person name="Luo K."/>
            <person name="Li Y."/>
            <person name="Yin Y."/>
            <person name="Li L."/>
            <person name="Wu C."/>
            <person name="Chen Y."/>
            <person name="Nowsheen S."/>
            <person name="Hu Q."/>
            <person name="Zhang L."/>
            <person name="Lou Z."/>
            <person name="Yuan J."/>
        </authorList>
    </citation>
    <scope>FUNCTION</scope>
    <scope>CATALYTIC ACTIVITY</scope>
    <scope>MUTAGENESIS OF CYS-262</scope>
</reference>
<reference key="7">
    <citation type="journal article" date="2019" name="PLoS Pathog.">
        <title>USP49 negatively regulates cellular antiviral responses via deconjugating K63-linked ubiquitination of MITA.</title>
        <authorList>
            <person name="Ye L."/>
            <person name="Zhang Q."/>
            <person name="Liuyu T."/>
            <person name="Xu Z."/>
            <person name="Zhang M.X."/>
            <person name="Luo M.H."/>
            <person name="Zeng W.B."/>
            <person name="Zhu Q."/>
            <person name="Lin D."/>
            <person name="Zhong B."/>
        </authorList>
    </citation>
    <scope>FUNCTION</scope>
    <scope>CATALYTIC ACTIVITY</scope>
    <scope>MUTAGENESIS OF CYS-262</scope>
</reference>
<reference key="8">
    <citation type="journal article" date="2019" name="Elife">
        <title>USP49 potently stabilizes APOBEC3G protein by removing ubiquitin and inhibits HIV-1 replication.</title>
        <authorList>
            <person name="Pan T."/>
            <person name="Song Z."/>
            <person name="Wu L."/>
            <person name="Liu G."/>
            <person name="Ma X."/>
            <person name="Peng Z."/>
            <person name="Zhou M."/>
            <person name="Liang L."/>
            <person name="Liu B."/>
            <person name="Liu J."/>
            <person name="Zhang J."/>
            <person name="Zhang X."/>
            <person name="Huang R."/>
            <person name="Zhao J."/>
            <person name="Li Y."/>
            <person name="Ling X."/>
            <person name="Luo Y."/>
            <person name="Tang X."/>
            <person name="Cai W."/>
            <person name="Deng K."/>
            <person name="Li L."/>
            <person name="Zhang H."/>
        </authorList>
    </citation>
    <scope>FUNCTION</scope>
    <scope>SUBCELLULAR LOCATION</scope>
</reference>
<reference key="9">
    <citation type="journal article" date="2022" name="Gene">
        <title>USP49 is a novel deubiquitylating enzyme for gamma H2AX in DNA double-strand break repair.</title>
        <authorList>
            <person name="Matsui M."/>
            <person name="Kajita S."/>
            <person name="Tsuchiya Y."/>
            <person name="Torii W."/>
            <person name="Tamekuni S."/>
            <person name="Nishi R."/>
        </authorList>
    </citation>
    <scope>FUNCTION</scope>
    <scope>CATALYTIC ACTIVITY</scope>
    <scope>SUBCELLULAR LOCATION</scope>
    <scope>MUTAGENESIS OF CYS-262</scope>
</reference>
<reference key="10">
    <citation type="journal article" date="2023" name="Cell Death Dis.">
        <title>USP49 deubiquitinase regulates the mitotic spindle checkpoint and prevents aneuploidy.</title>
        <authorList>
            <person name="Campos-Iglesias D."/>
            <person name="Fraile J.M."/>
            <person name="Bretones G."/>
            <person name="Montero A.A."/>
            <person name="Bonzon-Kulichenko E."/>
            <person name="Vazquez J."/>
            <person name="Lopez-Otin C."/>
            <person name="Freije J.M.P."/>
        </authorList>
    </citation>
    <scope>FUNCTION</scope>
    <scope>MUTAGENESIS OF TRP-158</scope>
    <scope>INTERACTION WITH CETN1; CETN2 AND CETN3</scope>
</reference>